<dbReference type="EC" id="2.5.1.75" evidence="1"/>
<dbReference type="EMBL" id="CP000480">
    <property type="protein sequence ID" value="ABK71690.1"/>
    <property type="molecule type" value="Genomic_DNA"/>
</dbReference>
<dbReference type="EMBL" id="CP001663">
    <property type="protein sequence ID" value="AFP39135.1"/>
    <property type="molecule type" value="Genomic_DNA"/>
</dbReference>
<dbReference type="RefSeq" id="WP_003894118.1">
    <property type="nucleotide sequence ID" value="NZ_SIJM01000032.1"/>
</dbReference>
<dbReference type="RefSeq" id="YP_887067.1">
    <property type="nucleotide sequence ID" value="NC_008596.1"/>
</dbReference>
<dbReference type="SMR" id="A0QVX9"/>
<dbReference type="STRING" id="246196.MSMEG_2734"/>
<dbReference type="PaxDb" id="246196-MSMEI_2667"/>
<dbReference type="GeneID" id="93457517"/>
<dbReference type="KEGG" id="msb:LJ00_13595"/>
<dbReference type="KEGG" id="msg:MSMEI_2667"/>
<dbReference type="KEGG" id="msm:MSMEG_2734"/>
<dbReference type="PATRIC" id="fig|246196.19.peg.2702"/>
<dbReference type="eggNOG" id="COG0324">
    <property type="taxonomic scope" value="Bacteria"/>
</dbReference>
<dbReference type="OrthoDB" id="9776390at2"/>
<dbReference type="Proteomes" id="UP000000757">
    <property type="component" value="Chromosome"/>
</dbReference>
<dbReference type="Proteomes" id="UP000006158">
    <property type="component" value="Chromosome"/>
</dbReference>
<dbReference type="GO" id="GO:0005524">
    <property type="term" value="F:ATP binding"/>
    <property type="evidence" value="ECO:0007669"/>
    <property type="project" value="UniProtKB-UniRule"/>
</dbReference>
<dbReference type="GO" id="GO:0052381">
    <property type="term" value="F:tRNA dimethylallyltransferase activity"/>
    <property type="evidence" value="ECO:0007669"/>
    <property type="project" value="UniProtKB-UniRule"/>
</dbReference>
<dbReference type="GO" id="GO:0006400">
    <property type="term" value="P:tRNA modification"/>
    <property type="evidence" value="ECO:0007669"/>
    <property type="project" value="TreeGrafter"/>
</dbReference>
<dbReference type="FunFam" id="1.10.20.140:FF:000001">
    <property type="entry name" value="tRNA dimethylallyltransferase"/>
    <property type="match status" value="1"/>
</dbReference>
<dbReference type="Gene3D" id="1.10.20.140">
    <property type="match status" value="1"/>
</dbReference>
<dbReference type="Gene3D" id="3.40.50.300">
    <property type="entry name" value="P-loop containing nucleotide triphosphate hydrolases"/>
    <property type="match status" value="1"/>
</dbReference>
<dbReference type="HAMAP" id="MF_00185">
    <property type="entry name" value="IPP_trans"/>
    <property type="match status" value="1"/>
</dbReference>
<dbReference type="InterPro" id="IPR039657">
    <property type="entry name" value="Dimethylallyltransferase"/>
</dbReference>
<dbReference type="InterPro" id="IPR018022">
    <property type="entry name" value="IPT"/>
</dbReference>
<dbReference type="InterPro" id="IPR027417">
    <property type="entry name" value="P-loop_NTPase"/>
</dbReference>
<dbReference type="NCBIfam" id="TIGR00174">
    <property type="entry name" value="miaA"/>
    <property type="match status" value="1"/>
</dbReference>
<dbReference type="PANTHER" id="PTHR11088">
    <property type="entry name" value="TRNA DIMETHYLALLYLTRANSFERASE"/>
    <property type="match status" value="1"/>
</dbReference>
<dbReference type="PANTHER" id="PTHR11088:SF60">
    <property type="entry name" value="TRNA DIMETHYLALLYLTRANSFERASE"/>
    <property type="match status" value="1"/>
</dbReference>
<dbReference type="Pfam" id="PF01715">
    <property type="entry name" value="IPPT"/>
    <property type="match status" value="1"/>
</dbReference>
<dbReference type="SUPFAM" id="SSF52540">
    <property type="entry name" value="P-loop containing nucleoside triphosphate hydrolases"/>
    <property type="match status" value="1"/>
</dbReference>
<name>MIAA_MYCS2</name>
<protein>
    <recommendedName>
        <fullName evidence="1">tRNA dimethylallyltransferase</fullName>
        <ecNumber evidence="1">2.5.1.75</ecNumber>
    </recommendedName>
    <alternativeName>
        <fullName evidence="1">Dimethylallyl diphosphate:tRNA dimethylallyltransferase</fullName>
        <shortName evidence="1">DMAPP:tRNA dimethylallyltransferase</shortName>
        <shortName evidence="1">DMATase</shortName>
    </alternativeName>
    <alternativeName>
        <fullName evidence="1">Isopentenyl-diphosphate:tRNA isopentenyltransferase</fullName>
        <shortName evidence="1">IPP transferase</shortName>
        <shortName evidence="1">IPPT</shortName>
        <shortName evidence="1">IPTase</shortName>
    </alternativeName>
</protein>
<accession>A0QVX9</accession>
<accession>I7FC77</accession>
<feature type="chain" id="PRO_1000020621" description="tRNA dimethylallyltransferase">
    <location>
        <begin position="1"/>
        <end position="302"/>
    </location>
</feature>
<feature type="binding site" evidence="1">
    <location>
        <begin position="9"/>
        <end position="16"/>
    </location>
    <ligand>
        <name>ATP</name>
        <dbReference type="ChEBI" id="CHEBI:30616"/>
    </ligand>
</feature>
<feature type="binding site" evidence="1">
    <location>
        <begin position="11"/>
        <end position="16"/>
    </location>
    <ligand>
        <name>substrate</name>
    </ligand>
</feature>
<feature type="site" description="Interaction with substrate tRNA" evidence="1">
    <location>
        <position position="100"/>
    </location>
</feature>
<feature type="site" description="Interaction with substrate tRNA" evidence="1">
    <location>
        <position position="121"/>
    </location>
</feature>
<keyword id="KW-0067">ATP-binding</keyword>
<keyword id="KW-0460">Magnesium</keyword>
<keyword id="KW-0547">Nucleotide-binding</keyword>
<keyword id="KW-1185">Reference proteome</keyword>
<keyword id="KW-0808">Transferase</keyword>
<keyword id="KW-0819">tRNA processing</keyword>
<organism>
    <name type="scientific">Mycolicibacterium smegmatis (strain ATCC 700084 / mc(2)155)</name>
    <name type="common">Mycobacterium smegmatis</name>
    <dbReference type="NCBI Taxonomy" id="246196"/>
    <lineage>
        <taxon>Bacteria</taxon>
        <taxon>Bacillati</taxon>
        <taxon>Actinomycetota</taxon>
        <taxon>Actinomycetes</taxon>
        <taxon>Mycobacteriales</taxon>
        <taxon>Mycobacteriaceae</taxon>
        <taxon>Mycolicibacterium</taxon>
    </lineage>
</organism>
<proteinExistence type="inferred from homology"/>
<gene>
    <name evidence="1" type="primary">miaA</name>
    <name type="ordered locus">MSMEG_2734</name>
    <name type="ordered locus">MSMEI_2667</name>
</gene>
<reference key="1">
    <citation type="submission" date="2006-10" db="EMBL/GenBank/DDBJ databases">
        <authorList>
            <person name="Fleischmann R.D."/>
            <person name="Dodson R.J."/>
            <person name="Haft D.H."/>
            <person name="Merkel J.S."/>
            <person name="Nelson W.C."/>
            <person name="Fraser C.M."/>
        </authorList>
    </citation>
    <scope>NUCLEOTIDE SEQUENCE [LARGE SCALE GENOMIC DNA]</scope>
    <source>
        <strain>ATCC 700084 / mc(2)155</strain>
    </source>
</reference>
<reference key="2">
    <citation type="journal article" date="2007" name="Genome Biol.">
        <title>Interrupted coding sequences in Mycobacterium smegmatis: authentic mutations or sequencing errors?</title>
        <authorList>
            <person name="Deshayes C."/>
            <person name="Perrodou E."/>
            <person name="Gallien S."/>
            <person name="Euphrasie D."/>
            <person name="Schaeffer C."/>
            <person name="Van-Dorsselaer A."/>
            <person name="Poch O."/>
            <person name="Lecompte O."/>
            <person name="Reyrat J.-M."/>
        </authorList>
    </citation>
    <scope>NUCLEOTIDE SEQUENCE [LARGE SCALE GENOMIC DNA]</scope>
    <source>
        <strain>ATCC 700084 / mc(2)155</strain>
    </source>
</reference>
<reference key="3">
    <citation type="journal article" date="2009" name="Genome Res.">
        <title>Ortho-proteogenomics: multiple proteomes investigation through orthology and a new MS-based protocol.</title>
        <authorList>
            <person name="Gallien S."/>
            <person name="Perrodou E."/>
            <person name="Carapito C."/>
            <person name="Deshayes C."/>
            <person name="Reyrat J.-M."/>
            <person name="Van Dorsselaer A."/>
            <person name="Poch O."/>
            <person name="Schaeffer C."/>
            <person name="Lecompte O."/>
        </authorList>
    </citation>
    <scope>NUCLEOTIDE SEQUENCE [LARGE SCALE GENOMIC DNA]</scope>
    <source>
        <strain>ATCC 700084 / mc(2)155</strain>
    </source>
</reference>
<evidence type="ECO:0000255" key="1">
    <source>
        <dbReference type="HAMAP-Rule" id="MF_00185"/>
    </source>
</evidence>
<comment type="function">
    <text evidence="1">Catalyzes the transfer of a dimethylallyl group onto the adenine at position 37 in tRNAs that read codons beginning with uridine, leading to the formation of N6-(dimethylallyl)adenosine (i(6)A).</text>
</comment>
<comment type="catalytic activity">
    <reaction evidence="1">
        <text>adenosine(37) in tRNA + dimethylallyl diphosphate = N(6)-dimethylallyladenosine(37) in tRNA + diphosphate</text>
        <dbReference type="Rhea" id="RHEA:26482"/>
        <dbReference type="Rhea" id="RHEA-COMP:10162"/>
        <dbReference type="Rhea" id="RHEA-COMP:10375"/>
        <dbReference type="ChEBI" id="CHEBI:33019"/>
        <dbReference type="ChEBI" id="CHEBI:57623"/>
        <dbReference type="ChEBI" id="CHEBI:74411"/>
        <dbReference type="ChEBI" id="CHEBI:74415"/>
        <dbReference type="EC" id="2.5.1.75"/>
    </reaction>
</comment>
<comment type="cofactor">
    <cofactor evidence="1">
        <name>Mg(2+)</name>
        <dbReference type="ChEBI" id="CHEBI:18420"/>
    </cofactor>
</comment>
<comment type="subunit">
    <text evidence="1">Monomer.</text>
</comment>
<comment type="similarity">
    <text evidence="1">Belongs to the IPP transferase family.</text>
</comment>
<sequence length="302" mass="32577">MNRPLAVIGPTGTGKSALALEFAERVGGEIVNADAMQQYRGMDIGTAKLTVEERRGIPHHQLDVLDVVETATVARYQQAAAADIETIAARGATPVIVGGSMLYIQSLLDEWSFPATDPAVRAKYEARLAEIGVAALHAELARVDAAAAASILPTDGRRIVRALEVVELTGEPFAASAPTIGAPRWDTAIIGLDWDTAVLDERLAQRTDKMFADGLVREVVDLLERGLRDGVTAARALGYAQVLADLDAGGDGSGAREPTFIGTRRYVRRQRSWFRRDHRVVWLDGASEGLVDDALRVWRAVS</sequence>